<reference key="1">
    <citation type="submission" date="2003-07" db="EMBL/GenBank/DDBJ databases">
        <title>Isolation rice heat shock factor by modified yeast one-hybrid system method.</title>
        <authorList>
            <person name="Yao Q.-H."/>
            <person name="Peng R.-H."/>
            <person name="Xiong A.-S."/>
        </authorList>
    </citation>
    <scope>NUCLEOTIDE SEQUENCE [MRNA] (ISOFORM 2)</scope>
</reference>
<reference key="2">
    <citation type="journal article" date="2005" name="Genome Res.">
        <title>Sequence, annotation, and analysis of synteny between rice chromosome 3 and diverged grass species.</title>
        <authorList>
            <consortium name="The rice chromosome 3 sequencing consortium"/>
            <person name="Buell C.R."/>
            <person name="Yuan Q."/>
            <person name="Ouyang S."/>
            <person name="Liu J."/>
            <person name="Zhu W."/>
            <person name="Wang A."/>
            <person name="Maiti R."/>
            <person name="Haas B."/>
            <person name="Wortman J."/>
            <person name="Pertea M."/>
            <person name="Jones K.M."/>
            <person name="Kim M."/>
            <person name="Overton L."/>
            <person name="Tsitrin T."/>
            <person name="Fadrosh D."/>
            <person name="Bera J."/>
            <person name="Weaver B."/>
            <person name="Jin S."/>
            <person name="Johri S."/>
            <person name="Reardon M."/>
            <person name="Webb K."/>
            <person name="Hill J."/>
            <person name="Moffat K."/>
            <person name="Tallon L."/>
            <person name="Van Aken S."/>
            <person name="Lewis M."/>
            <person name="Utterback T."/>
            <person name="Feldblyum T."/>
            <person name="Zismann V."/>
            <person name="Iobst S."/>
            <person name="Hsiao J."/>
            <person name="de Vazeille A.R."/>
            <person name="Salzberg S.L."/>
            <person name="White O."/>
            <person name="Fraser C.M."/>
            <person name="Yu Y."/>
            <person name="Kim H."/>
            <person name="Rambo T."/>
            <person name="Currie J."/>
            <person name="Collura K."/>
            <person name="Kernodle-Thompson S."/>
            <person name="Wei F."/>
            <person name="Kudrna K."/>
            <person name="Ammiraju J.S.S."/>
            <person name="Luo M."/>
            <person name="Goicoechea J.L."/>
            <person name="Wing R.A."/>
            <person name="Henry D."/>
            <person name="Oates R."/>
            <person name="Palmer M."/>
            <person name="Pries G."/>
            <person name="Saski C."/>
            <person name="Simmons J."/>
            <person name="Soderlund C."/>
            <person name="Nelson W."/>
            <person name="de la Bastide M."/>
            <person name="Spiegel L."/>
            <person name="Nascimento L."/>
            <person name="Huang E."/>
            <person name="Preston R."/>
            <person name="Zutavern T."/>
            <person name="Palmer L."/>
            <person name="O'Shaughnessy A."/>
            <person name="Dike S."/>
            <person name="McCombie W.R."/>
            <person name="Minx P."/>
            <person name="Cordum H."/>
            <person name="Wilson R."/>
            <person name="Jin W."/>
            <person name="Lee H.R."/>
            <person name="Jiang J."/>
            <person name="Jackson S."/>
        </authorList>
    </citation>
    <scope>NUCLEOTIDE SEQUENCE [LARGE SCALE GENOMIC DNA]</scope>
    <source>
        <strain>cv. Nipponbare</strain>
    </source>
</reference>
<reference key="3">
    <citation type="journal article" date="2005" name="Nature">
        <title>The map-based sequence of the rice genome.</title>
        <authorList>
            <consortium name="International rice genome sequencing project (IRGSP)"/>
        </authorList>
    </citation>
    <scope>NUCLEOTIDE SEQUENCE [LARGE SCALE GENOMIC DNA]</scope>
    <source>
        <strain>cv. Nipponbare</strain>
    </source>
</reference>
<reference key="4">
    <citation type="journal article" date="2008" name="Nucleic Acids Res.">
        <title>The rice annotation project database (RAP-DB): 2008 update.</title>
        <authorList>
            <consortium name="The rice annotation project (RAP)"/>
        </authorList>
    </citation>
    <scope>GENOME REANNOTATION</scope>
    <source>
        <strain>cv. Nipponbare</strain>
    </source>
</reference>
<reference key="5">
    <citation type="journal article" date="2013" name="Rice">
        <title>Improvement of the Oryza sativa Nipponbare reference genome using next generation sequence and optical map data.</title>
        <authorList>
            <person name="Kawahara Y."/>
            <person name="de la Bastide M."/>
            <person name="Hamilton J.P."/>
            <person name="Kanamori H."/>
            <person name="McCombie W.R."/>
            <person name="Ouyang S."/>
            <person name="Schwartz D.C."/>
            <person name="Tanaka T."/>
            <person name="Wu J."/>
            <person name="Zhou S."/>
            <person name="Childs K.L."/>
            <person name="Davidson R.M."/>
            <person name="Lin H."/>
            <person name="Quesada-Ocampo L."/>
            <person name="Vaillancourt B."/>
            <person name="Sakai H."/>
            <person name="Lee S.S."/>
            <person name="Kim J."/>
            <person name="Numa H."/>
            <person name="Itoh T."/>
            <person name="Buell C.R."/>
            <person name="Matsumoto T."/>
        </authorList>
    </citation>
    <scope>GENOME REANNOTATION</scope>
    <source>
        <strain>cv. Nipponbare</strain>
    </source>
</reference>
<reference key="6">
    <citation type="journal article" date="2005" name="PLoS Biol.">
        <title>The genomes of Oryza sativa: a history of duplications.</title>
        <authorList>
            <person name="Yu J."/>
            <person name="Wang J."/>
            <person name="Lin W."/>
            <person name="Li S."/>
            <person name="Li H."/>
            <person name="Zhou J."/>
            <person name="Ni P."/>
            <person name="Dong W."/>
            <person name="Hu S."/>
            <person name="Zeng C."/>
            <person name="Zhang J."/>
            <person name="Zhang Y."/>
            <person name="Li R."/>
            <person name="Xu Z."/>
            <person name="Li S."/>
            <person name="Li X."/>
            <person name="Zheng H."/>
            <person name="Cong L."/>
            <person name="Lin L."/>
            <person name="Yin J."/>
            <person name="Geng J."/>
            <person name="Li G."/>
            <person name="Shi J."/>
            <person name="Liu J."/>
            <person name="Lv H."/>
            <person name="Li J."/>
            <person name="Wang J."/>
            <person name="Deng Y."/>
            <person name="Ran L."/>
            <person name="Shi X."/>
            <person name="Wang X."/>
            <person name="Wu Q."/>
            <person name="Li C."/>
            <person name="Ren X."/>
            <person name="Wang J."/>
            <person name="Wang X."/>
            <person name="Li D."/>
            <person name="Liu D."/>
            <person name="Zhang X."/>
            <person name="Ji Z."/>
            <person name="Zhao W."/>
            <person name="Sun Y."/>
            <person name="Zhang Z."/>
            <person name="Bao J."/>
            <person name="Han Y."/>
            <person name="Dong L."/>
            <person name="Ji J."/>
            <person name="Chen P."/>
            <person name="Wu S."/>
            <person name="Liu J."/>
            <person name="Xiao Y."/>
            <person name="Bu D."/>
            <person name="Tan J."/>
            <person name="Yang L."/>
            <person name="Ye C."/>
            <person name="Zhang J."/>
            <person name="Xu J."/>
            <person name="Zhou Y."/>
            <person name="Yu Y."/>
            <person name="Zhang B."/>
            <person name="Zhuang S."/>
            <person name="Wei H."/>
            <person name="Liu B."/>
            <person name="Lei M."/>
            <person name="Yu H."/>
            <person name="Li Y."/>
            <person name="Xu H."/>
            <person name="Wei S."/>
            <person name="He X."/>
            <person name="Fang L."/>
            <person name="Zhang Z."/>
            <person name="Zhang Y."/>
            <person name="Huang X."/>
            <person name="Su Z."/>
            <person name="Tong W."/>
            <person name="Li J."/>
            <person name="Tong Z."/>
            <person name="Li S."/>
            <person name="Ye J."/>
            <person name="Wang L."/>
            <person name="Fang L."/>
            <person name="Lei T."/>
            <person name="Chen C.-S."/>
            <person name="Chen H.-C."/>
            <person name="Xu Z."/>
            <person name="Li H."/>
            <person name="Huang H."/>
            <person name="Zhang F."/>
            <person name="Xu H."/>
            <person name="Li N."/>
            <person name="Zhao C."/>
            <person name="Li S."/>
            <person name="Dong L."/>
            <person name="Huang Y."/>
            <person name="Li L."/>
            <person name="Xi Y."/>
            <person name="Qi Q."/>
            <person name="Li W."/>
            <person name="Zhang B."/>
            <person name="Hu W."/>
            <person name="Zhang Y."/>
            <person name="Tian X."/>
            <person name="Jiao Y."/>
            <person name="Liang X."/>
            <person name="Jin J."/>
            <person name="Gao L."/>
            <person name="Zheng W."/>
            <person name="Hao B."/>
            <person name="Liu S.-M."/>
            <person name="Wang W."/>
            <person name="Yuan L."/>
            <person name="Cao M."/>
            <person name="McDermott J."/>
            <person name="Samudrala R."/>
            <person name="Wang J."/>
            <person name="Wong G.K.-S."/>
            <person name="Yang H."/>
        </authorList>
    </citation>
    <scope>NUCLEOTIDE SEQUENCE [LARGE SCALE GENOMIC DNA]</scope>
    <source>
        <strain>cv. Nipponbare</strain>
    </source>
</reference>
<reference key="7">
    <citation type="journal article" date="2004" name="J. Biosci.">
        <title>Heat stress response in plants: a complex game with chaperones and more than twenty heat stress transcription factors.</title>
        <authorList>
            <person name="Baniwal S.K."/>
            <person name="Bharti K."/>
            <person name="Chan K.Y."/>
            <person name="Fauth M."/>
            <person name="Ganguli A."/>
            <person name="Kotak S."/>
            <person name="Mishra S.K."/>
            <person name="Nover L."/>
            <person name="Port M."/>
            <person name="Scharf K.-D."/>
            <person name="Tripp J."/>
            <person name="Weber C."/>
            <person name="Zielinski D."/>
            <person name="von Koskull-Doering P."/>
        </authorList>
    </citation>
    <scope>GENE FAMILY</scope>
    <scope>NOMENCLATURE</scope>
</reference>
<reference key="8">
    <citation type="journal article" date="2008" name="J. Genet. Genomics">
        <title>Genome-wide analysis of heat shock transcription factor families in rice and Arabidopsis.</title>
        <authorList>
            <person name="Guo J."/>
            <person name="Wu J."/>
            <person name="Ji Q."/>
            <person name="Wang C."/>
            <person name="Luo L."/>
            <person name="Yuan Y."/>
            <person name="Wang Y."/>
            <person name="Wang J."/>
        </authorList>
    </citation>
    <scope>GENE FAMILY</scope>
    <scope>NOMENCLATURE</scope>
    <scope>DOMAIN AHA</scope>
</reference>
<reference key="9">
    <citation type="journal article" date="2008" name="Planta">
        <title>Expression of rice heat stress transcription factor OsHsfA2e enhances tolerance to environmental stresses in transgenic Arabidopsis.</title>
        <authorList>
            <person name="Yokotani N."/>
            <person name="Ichikawa T."/>
            <person name="Kondou Y."/>
            <person name="Matsui M."/>
            <person name="Hirochika H."/>
            <person name="Iwabuchi M."/>
            <person name="Oda K."/>
        </authorList>
    </citation>
    <scope>INDUCTION</scope>
</reference>
<feature type="chain" id="PRO_0000350824" description="Heat stress transcription factor A-2d">
    <location>
        <begin position="1"/>
        <end position="359"/>
    </location>
</feature>
<feature type="region of interest" description="Disordered" evidence="3">
    <location>
        <begin position="1"/>
        <end position="30"/>
    </location>
</feature>
<feature type="region of interest" description="Hydrophobic repeat HR-A/B">
    <location>
        <begin position="158"/>
        <end position="208"/>
    </location>
</feature>
<feature type="region of interest" description="Disordered" evidence="3">
    <location>
        <begin position="290"/>
        <end position="314"/>
    </location>
</feature>
<feature type="coiled-coil region" evidence="2">
    <location>
        <begin position="150"/>
        <end position="202"/>
    </location>
</feature>
<feature type="short sequence motif" description="Nuclear localization signal" evidence="2">
    <location>
        <begin position="233"/>
        <end position="237"/>
    </location>
</feature>
<feature type="short sequence motif" description="Nuclear export signal" evidence="2">
    <location>
        <begin position="279"/>
        <end position="286"/>
    </location>
</feature>
<feature type="short sequence motif" description="AHA">
    <location>
        <begin position="315"/>
        <end position="324"/>
    </location>
</feature>
<feature type="compositionally biased region" description="Basic and acidic residues" evidence="3">
    <location>
        <begin position="1"/>
        <end position="13"/>
    </location>
</feature>
<feature type="compositionally biased region" description="Polar residues" evidence="3">
    <location>
        <begin position="299"/>
        <end position="311"/>
    </location>
</feature>
<feature type="splice variant" id="VSP_035445" description="In isoform 2." evidence="6">
    <original>Y</original>
    <variation>YFLVRTNYLNKRSHFYSLRFQ</variation>
    <location>
        <position position="96"/>
    </location>
</feature>
<keyword id="KW-0025">Alternative splicing</keyword>
<keyword id="KW-0175">Coiled coil</keyword>
<keyword id="KW-0963">Cytoplasm</keyword>
<keyword id="KW-0238">DNA-binding</keyword>
<keyword id="KW-0539">Nucleus</keyword>
<keyword id="KW-0597">Phosphoprotein</keyword>
<keyword id="KW-1185">Reference proteome</keyword>
<keyword id="KW-0346">Stress response</keyword>
<keyword id="KW-0804">Transcription</keyword>
<keyword id="KW-0805">Transcription regulation</keyword>
<proteinExistence type="evidence at transcript level"/>
<sequence>MEKMMPGMVKEEWPPSSPEEGEAPRPMEGLHEVGPPPFLTKTFDLVADPATDGVVSWGRAGSSFVVWDPHVFAAVFLPRFFKHNNFSSFVRQLNTYGFRKIDPDRWEFANDGFLRGQRHLLKMIKRRRPLSYLPGSQQALGTCLEVGQFGLDEEIDRLKRDKNILLAEVVKLRHKQQSTKANMRAMEERLQHAEQKQVQMMGFLARAMQNPDFFHQLIHQQDKMKGLEDTFSKKRTRSIDIVPFLNPGEVSQGDQLESTLLFDPRPFAELNDEPAKSELENLALNIQGLGKGKQDVNRTRNQPRNQASNETELTDDFWEELLNEGARDDAGIPGMERRRPRYVDALAQKLGYLSNSSQK</sequence>
<accession>Q8H7Y6</accession>
<dbReference type="EMBL" id="AY344489">
    <property type="protein sequence ID" value="AAQ23061.1"/>
    <property type="molecule type" value="mRNA"/>
</dbReference>
<dbReference type="EMBL" id="AC105729">
    <property type="protein sequence ID" value="AAN06862.1"/>
    <property type="molecule type" value="Genomic_DNA"/>
</dbReference>
<dbReference type="EMBL" id="DP000009">
    <property type="protein sequence ID" value="ABF94118.1"/>
    <property type="molecule type" value="Genomic_DNA"/>
</dbReference>
<dbReference type="EMBL" id="AP008209">
    <property type="protein sequence ID" value="BAF10961.1"/>
    <property type="molecule type" value="Genomic_DNA"/>
</dbReference>
<dbReference type="EMBL" id="AP014959">
    <property type="status" value="NOT_ANNOTATED_CDS"/>
    <property type="molecule type" value="Genomic_DNA"/>
</dbReference>
<dbReference type="EMBL" id="CM000140">
    <property type="protein sequence ID" value="EAZ25677.1"/>
    <property type="molecule type" value="Genomic_DNA"/>
</dbReference>
<dbReference type="RefSeq" id="NP_001388980.1">
    <molecule id="Q8H7Y6-2"/>
    <property type="nucleotide sequence ID" value="NM_001402051.1"/>
</dbReference>
<dbReference type="SMR" id="Q8H7Y6"/>
<dbReference type="FunCoup" id="Q8H7Y6">
    <property type="interactions" value="21"/>
</dbReference>
<dbReference type="IntAct" id="Q8H7Y6">
    <property type="interactions" value="1"/>
</dbReference>
<dbReference type="MINT" id="Q8H7Y6"/>
<dbReference type="STRING" id="39947.Q8H7Y6"/>
<dbReference type="PaxDb" id="39947-Q8H7Y6"/>
<dbReference type="KEGG" id="dosa:Os03g0161900"/>
<dbReference type="InParanoid" id="Q8H7Y6"/>
<dbReference type="Proteomes" id="UP000000763">
    <property type="component" value="Chromosome 3"/>
</dbReference>
<dbReference type="Proteomes" id="UP000007752">
    <property type="component" value="Chromosome 3"/>
</dbReference>
<dbReference type="Proteomes" id="UP000059680">
    <property type="component" value="Chromosome 3"/>
</dbReference>
<dbReference type="GO" id="GO:0005737">
    <property type="term" value="C:cytoplasm"/>
    <property type="evidence" value="ECO:0007669"/>
    <property type="project" value="UniProtKB-SubCell"/>
</dbReference>
<dbReference type="GO" id="GO:0005634">
    <property type="term" value="C:nucleus"/>
    <property type="evidence" value="ECO:0000318"/>
    <property type="project" value="GO_Central"/>
</dbReference>
<dbReference type="GO" id="GO:0003700">
    <property type="term" value="F:DNA-binding transcription factor activity"/>
    <property type="evidence" value="ECO:0000318"/>
    <property type="project" value="GO_Central"/>
</dbReference>
<dbReference type="GO" id="GO:0043565">
    <property type="term" value="F:sequence-specific DNA binding"/>
    <property type="evidence" value="ECO:0007669"/>
    <property type="project" value="InterPro"/>
</dbReference>
<dbReference type="GO" id="GO:0034605">
    <property type="term" value="P:cellular response to heat"/>
    <property type="evidence" value="ECO:0000318"/>
    <property type="project" value="GO_Central"/>
</dbReference>
<dbReference type="GO" id="GO:0006357">
    <property type="term" value="P:regulation of transcription by RNA polymerase II"/>
    <property type="evidence" value="ECO:0000318"/>
    <property type="project" value="GO_Central"/>
</dbReference>
<dbReference type="FunFam" id="1.10.10.10:FF:000057">
    <property type="entry name" value="Heat shock transcription factor 1"/>
    <property type="match status" value="1"/>
</dbReference>
<dbReference type="Gene3D" id="1.10.10.10">
    <property type="entry name" value="Winged helix-like DNA-binding domain superfamily/Winged helix DNA-binding domain"/>
    <property type="match status" value="1"/>
</dbReference>
<dbReference type="InterPro" id="IPR000232">
    <property type="entry name" value="HSF_DNA-bd"/>
</dbReference>
<dbReference type="InterPro" id="IPR036388">
    <property type="entry name" value="WH-like_DNA-bd_sf"/>
</dbReference>
<dbReference type="InterPro" id="IPR036390">
    <property type="entry name" value="WH_DNA-bd_sf"/>
</dbReference>
<dbReference type="PANTHER" id="PTHR10015:SF456">
    <property type="entry name" value="E2F_DP FAMILY WINGED-HELIX DNA-BINDING DOMAIN-CONTAINING PROTEIN-RELATED"/>
    <property type="match status" value="1"/>
</dbReference>
<dbReference type="PANTHER" id="PTHR10015">
    <property type="entry name" value="HEAT SHOCK TRANSCRIPTION FACTOR"/>
    <property type="match status" value="1"/>
</dbReference>
<dbReference type="Pfam" id="PF00447">
    <property type="entry name" value="HSF_DNA-bind"/>
    <property type="match status" value="1"/>
</dbReference>
<dbReference type="PRINTS" id="PR00056">
    <property type="entry name" value="HSFDOMAIN"/>
</dbReference>
<dbReference type="SMART" id="SM00415">
    <property type="entry name" value="HSF"/>
    <property type="match status" value="1"/>
</dbReference>
<dbReference type="SUPFAM" id="SSF46785">
    <property type="entry name" value="Winged helix' DNA-binding domain"/>
    <property type="match status" value="1"/>
</dbReference>
<dbReference type="PROSITE" id="PS00434">
    <property type="entry name" value="HSF_DOMAIN"/>
    <property type="match status" value="1"/>
</dbReference>
<gene>
    <name type="primary">HSFA2D</name>
    <name type="synonym">HSF08</name>
    <name type="synonym">HSF7</name>
    <name type="ordered locus">Os03g0161900</name>
    <name type="ordered locus">LOC_Os03g06630</name>
    <name type="ORF">OJ1607A12.12</name>
    <name type="ORF">OsJ_009160</name>
</gene>
<protein>
    <recommendedName>
        <fullName>Heat stress transcription factor A-2d</fullName>
    </recommendedName>
    <alternativeName>
        <fullName>Heat stress transcription factor 7</fullName>
        <shortName>rHsf7</shortName>
    </alternativeName>
    <alternativeName>
        <fullName>Heat stress transcription factor 8</fullName>
        <shortName>OsHsf-08</shortName>
    </alternativeName>
</protein>
<organism>
    <name type="scientific">Oryza sativa subsp. japonica</name>
    <name type="common">Rice</name>
    <dbReference type="NCBI Taxonomy" id="39947"/>
    <lineage>
        <taxon>Eukaryota</taxon>
        <taxon>Viridiplantae</taxon>
        <taxon>Streptophyta</taxon>
        <taxon>Embryophyta</taxon>
        <taxon>Tracheophyta</taxon>
        <taxon>Spermatophyta</taxon>
        <taxon>Magnoliopsida</taxon>
        <taxon>Liliopsida</taxon>
        <taxon>Poales</taxon>
        <taxon>Poaceae</taxon>
        <taxon>BOP clade</taxon>
        <taxon>Oryzoideae</taxon>
        <taxon>Oryzeae</taxon>
        <taxon>Oryzinae</taxon>
        <taxon>Oryza</taxon>
        <taxon>Oryza sativa</taxon>
    </lineage>
</organism>
<name>HFA2D_ORYSJ</name>
<comment type="function">
    <text evidence="1">Transcriptional regulator that specifically binds DNA of heat shock promoter elements (HSE).</text>
</comment>
<comment type="subunit">
    <text evidence="1">Homotrimer.</text>
</comment>
<comment type="subcellular location">
    <subcellularLocation>
        <location evidence="7">Cytoplasm</location>
    </subcellularLocation>
    <subcellularLocation>
        <location evidence="7">Nucleus</location>
    </subcellularLocation>
</comment>
<comment type="alternative products">
    <event type="alternative splicing"/>
    <isoform>
        <id>Q8H7Y6-1</id>
        <name>1</name>
        <sequence type="displayed"/>
    </isoform>
    <isoform>
        <id>Q8H7Y6-2</id>
        <name>2</name>
        <sequence type="described" ref="VSP_035445"/>
    </isoform>
</comment>
<comment type="induction">
    <text evidence="4">By heat stress.</text>
</comment>
<comment type="domain">
    <text evidence="5">The hydrophobic-rich region (HR-A/B) corresponds to the oligomerization domain. AHA motifs are transcriptional activator elements.</text>
</comment>
<comment type="PTM">
    <text evidence="1">Exhibits temperature-dependent phosphorylation.</text>
</comment>
<comment type="similarity">
    <text evidence="7">Belongs to the HSF family. Class A subfamily.</text>
</comment>
<evidence type="ECO:0000250" key="1"/>
<evidence type="ECO:0000255" key="2"/>
<evidence type="ECO:0000256" key="3">
    <source>
        <dbReference type="SAM" id="MobiDB-lite"/>
    </source>
</evidence>
<evidence type="ECO:0000269" key="4">
    <source>
    </source>
</evidence>
<evidence type="ECO:0000269" key="5">
    <source>
    </source>
</evidence>
<evidence type="ECO:0000303" key="6">
    <source ref="1"/>
</evidence>
<evidence type="ECO:0000305" key="7"/>